<feature type="signal peptide" evidence="1">
    <location>
        <begin position="1"/>
        <end position="21"/>
    </location>
</feature>
<feature type="propeptide" id="PRO_0000447076" evidence="5">
    <location>
        <begin position="22"/>
        <end position="38"/>
    </location>
</feature>
<feature type="peptide" id="PRO_0000447077" description="U-myrmeciitoxin(01)-Mg5a" evidence="2">
    <location>
        <begin position="39"/>
        <end position="59"/>
    </location>
</feature>
<sequence>MRLSYLSLALAIIFVLTIMHASNVEAKASADPEPDAVGSINVKNLMDMIREQITSRLKK</sequence>
<comment type="function">
    <text evidence="4">May have antimicrobial properties, like most ant linear peptides.</text>
</comment>
<comment type="subcellular location">
    <subcellularLocation>
        <location evidence="2">Secreted</location>
    </subcellularLocation>
</comment>
<comment type="tissue specificity">
    <text evidence="5">Expressed by the venom gland.</text>
</comment>
<comment type="mass spectrometry"/>
<comment type="similarity">
    <text evidence="4">Belongs to the formicidae venom precursor-01 superfamily.</text>
</comment>
<comment type="online information" name="National Center for Biotechnology Information (NCBI)">
    <link uri="https://www.ncbi.nlm.nih.gov/nuccore/GGFG01000006"/>
</comment>
<reference key="1">
    <citation type="journal article" date="2018" name="Sci. Adv.">
        <title>A comprehensive portrait of the venom of the giant red bull ant, Myrmecia gulosa, reveals a hyperdiverse hymenopteran toxin gene family.</title>
        <authorList>
            <person name="Robinson S.D."/>
            <person name="Mueller A."/>
            <person name="Clayton D."/>
            <person name="Starobova H."/>
            <person name="Hamilton B.R."/>
            <person name="Payne R.J."/>
            <person name="Vetter I."/>
            <person name="King G.F."/>
            <person name="Undheim E.A.B."/>
        </authorList>
    </citation>
    <scope>NUCLEOTIDE SEQUENCE [MRNA]</scope>
    <scope>MASS SPECTROMETRY</scope>
    <scope>SUBCELLULAR LOCATION</scope>
    <source>
        <tissue>Venom</tissue>
        <tissue>Venom gland</tissue>
    </source>
</reference>
<evidence type="ECO:0000255" key="1"/>
<evidence type="ECO:0000269" key="2">
    <source>
    </source>
</evidence>
<evidence type="ECO:0000303" key="3">
    <source>
    </source>
</evidence>
<evidence type="ECO:0000305" key="4"/>
<evidence type="ECO:0000305" key="5">
    <source>
    </source>
</evidence>
<name>TX15A_MYRGU</name>
<accession>P0DSJ8</accession>
<protein>
    <recommendedName>
        <fullName evidence="4">U-myrmeciitoxin(01)-Mg5a</fullName>
        <shortName evidence="3">MIITX(01)-Mg5a</shortName>
        <shortName evidence="4">U-MIITX(01)-Mg5a</shortName>
    </recommendedName>
</protein>
<dbReference type="SMR" id="P0DSJ8"/>
<dbReference type="GO" id="GO:0005576">
    <property type="term" value="C:extracellular region"/>
    <property type="evidence" value="ECO:0007669"/>
    <property type="project" value="UniProtKB-SubCell"/>
</dbReference>
<dbReference type="InterPro" id="IPR049518">
    <property type="entry name" value="Pilosulin"/>
</dbReference>
<dbReference type="Pfam" id="PF17499">
    <property type="entry name" value="Pilosulin"/>
    <property type="match status" value="1"/>
</dbReference>
<proteinExistence type="evidence at protein level"/>
<organism>
    <name type="scientific">Myrmecia gulosa</name>
    <name type="common">Red bulldog ant</name>
    <dbReference type="NCBI Taxonomy" id="36170"/>
    <lineage>
        <taxon>Eukaryota</taxon>
        <taxon>Metazoa</taxon>
        <taxon>Ecdysozoa</taxon>
        <taxon>Arthropoda</taxon>
        <taxon>Hexapoda</taxon>
        <taxon>Insecta</taxon>
        <taxon>Pterygota</taxon>
        <taxon>Neoptera</taxon>
        <taxon>Endopterygota</taxon>
        <taxon>Hymenoptera</taxon>
        <taxon>Apocrita</taxon>
        <taxon>Aculeata</taxon>
        <taxon>Formicoidea</taxon>
        <taxon>Formicidae</taxon>
        <taxon>Myrmeciinae</taxon>
        <taxon>Myrmeciini</taxon>
        <taxon>Myrmecia</taxon>
    </lineage>
</organism>
<keyword id="KW-0929">Antimicrobial</keyword>
<keyword id="KW-0964">Secreted</keyword>
<keyword id="KW-0732">Signal</keyword>